<protein>
    <recommendedName>
        <fullName evidence="1">Acetate kinase</fullName>
        <ecNumber evidence="1">2.7.2.1</ecNumber>
    </recommendedName>
    <alternativeName>
        <fullName evidence="1">Acetokinase</fullName>
    </alternativeName>
</protein>
<sequence>MSARNILVINCGSSSIKFALVNEAQEQFPLSGLAERLGSPEAILHWQQGDERDSLVIAGADHRLALSHLLPIVQRVAAGELHGIGHRVVHGGEYFSGASRLDAVSLQAIRQVAPLAPLHNPANLLGIEAAMKLFPTLTQVAVFDTAFHQSLPEHAYRYAVPEALYREHGVRRYGFHGTSHRYVSQKAAQMAGLPADASSWLVAHLGNGCSTCAVENGHSRDTSMGLTPLEGLVMGTRSGDVDPNLHSHLARTLGWSLEQIDSMLNKDSGLLGLSGLSNDMRSLEQAREQGHAGATLAIEVFCYRLAKSLAAMSCALRRLDGLIFTGGIGENSALIRSKTLEHLGLLGFALDPAANARCVRGVGGPIQAAHGPLVLVVPTNEERQIALDTLALLD</sequence>
<name>ACKA_ECTM1</name>
<reference key="1">
    <citation type="submission" date="2007-04" db="EMBL/GenBank/DDBJ databases">
        <title>Complete sequence of Pseudomonas mendocina ymp.</title>
        <authorList>
            <consortium name="US DOE Joint Genome Institute"/>
            <person name="Copeland A."/>
            <person name="Lucas S."/>
            <person name="Lapidus A."/>
            <person name="Barry K."/>
            <person name="Glavina del Rio T."/>
            <person name="Dalin E."/>
            <person name="Tice H."/>
            <person name="Pitluck S."/>
            <person name="Kiss H."/>
            <person name="Brettin T."/>
            <person name="Detter J.C."/>
            <person name="Bruce D."/>
            <person name="Han C."/>
            <person name="Schmutz J."/>
            <person name="Larimer F."/>
            <person name="Land M."/>
            <person name="Hauser L."/>
            <person name="Kyrpides N."/>
            <person name="Mikhailova N."/>
            <person name="Hersman L."/>
            <person name="Dubois J."/>
            <person name="Maurice P."/>
            <person name="Richardson P."/>
        </authorList>
    </citation>
    <scope>NUCLEOTIDE SEQUENCE [LARGE SCALE GENOMIC DNA]</scope>
    <source>
        <strain>ymp</strain>
    </source>
</reference>
<gene>
    <name evidence="1" type="primary">ackA</name>
    <name type="ordered locus">Pmen_3644</name>
</gene>
<keyword id="KW-0067">ATP-binding</keyword>
<keyword id="KW-0963">Cytoplasm</keyword>
<keyword id="KW-0418">Kinase</keyword>
<keyword id="KW-0460">Magnesium</keyword>
<keyword id="KW-0479">Metal-binding</keyword>
<keyword id="KW-0547">Nucleotide-binding</keyword>
<keyword id="KW-0808">Transferase</keyword>
<feature type="chain" id="PRO_1000002248" description="Acetate kinase">
    <location>
        <begin position="1"/>
        <end position="394"/>
    </location>
</feature>
<feature type="active site" description="Proton donor/acceptor" evidence="1">
    <location>
        <position position="144"/>
    </location>
</feature>
<feature type="binding site" evidence="1">
    <location>
        <position position="10"/>
    </location>
    <ligand>
        <name>Mg(2+)</name>
        <dbReference type="ChEBI" id="CHEBI:18420"/>
    </ligand>
</feature>
<feature type="binding site" evidence="1">
    <location>
        <position position="17"/>
    </location>
    <ligand>
        <name>ATP</name>
        <dbReference type="ChEBI" id="CHEBI:30616"/>
    </ligand>
</feature>
<feature type="binding site" evidence="1">
    <location>
        <position position="87"/>
    </location>
    <ligand>
        <name>substrate</name>
    </ligand>
</feature>
<feature type="binding site" evidence="1">
    <location>
        <begin position="204"/>
        <end position="208"/>
    </location>
    <ligand>
        <name>ATP</name>
        <dbReference type="ChEBI" id="CHEBI:30616"/>
    </ligand>
</feature>
<feature type="binding site" evidence="1">
    <location>
        <begin position="279"/>
        <end position="281"/>
    </location>
    <ligand>
        <name>ATP</name>
        <dbReference type="ChEBI" id="CHEBI:30616"/>
    </ligand>
</feature>
<feature type="binding site" evidence="1">
    <location>
        <begin position="327"/>
        <end position="331"/>
    </location>
    <ligand>
        <name>ATP</name>
        <dbReference type="ChEBI" id="CHEBI:30616"/>
    </ligand>
</feature>
<feature type="binding site" evidence="1">
    <location>
        <position position="381"/>
    </location>
    <ligand>
        <name>Mg(2+)</name>
        <dbReference type="ChEBI" id="CHEBI:18420"/>
    </ligand>
</feature>
<feature type="site" description="Transition state stabilizer" evidence="1">
    <location>
        <position position="176"/>
    </location>
</feature>
<feature type="site" description="Transition state stabilizer" evidence="1">
    <location>
        <position position="237"/>
    </location>
</feature>
<organism>
    <name type="scientific">Ectopseudomonas mendocina (strain ymp)</name>
    <name type="common">Pseudomonas mendocina</name>
    <dbReference type="NCBI Taxonomy" id="399739"/>
    <lineage>
        <taxon>Bacteria</taxon>
        <taxon>Pseudomonadati</taxon>
        <taxon>Pseudomonadota</taxon>
        <taxon>Gammaproteobacteria</taxon>
        <taxon>Pseudomonadales</taxon>
        <taxon>Pseudomonadaceae</taxon>
        <taxon>Ectopseudomonas</taxon>
    </lineage>
</organism>
<evidence type="ECO:0000255" key="1">
    <source>
        <dbReference type="HAMAP-Rule" id="MF_00020"/>
    </source>
</evidence>
<dbReference type="EC" id="2.7.2.1" evidence="1"/>
<dbReference type="EMBL" id="CP000680">
    <property type="protein sequence ID" value="ABP86392.1"/>
    <property type="molecule type" value="Genomic_DNA"/>
</dbReference>
<dbReference type="SMR" id="A4XYH6"/>
<dbReference type="STRING" id="399739.Pmen_3644"/>
<dbReference type="KEGG" id="pmy:Pmen_3644"/>
<dbReference type="PATRIC" id="fig|399739.8.peg.3693"/>
<dbReference type="eggNOG" id="COG0282">
    <property type="taxonomic scope" value="Bacteria"/>
</dbReference>
<dbReference type="HOGENOM" id="CLU_020352_0_1_6"/>
<dbReference type="OrthoDB" id="9802453at2"/>
<dbReference type="UniPathway" id="UPA00340">
    <property type="reaction ID" value="UER00458"/>
</dbReference>
<dbReference type="GO" id="GO:0005829">
    <property type="term" value="C:cytosol"/>
    <property type="evidence" value="ECO:0007669"/>
    <property type="project" value="TreeGrafter"/>
</dbReference>
<dbReference type="GO" id="GO:0008776">
    <property type="term" value="F:acetate kinase activity"/>
    <property type="evidence" value="ECO:0007669"/>
    <property type="project" value="UniProtKB-UniRule"/>
</dbReference>
<dbReference type="GO" id="GO:0005524">
    <property type="term" value="F:ATP binding"/>
    <property type="evidence" value="ECO:0007669"/>
    <property type="project" value="UniProtKB-KW"/>
</dbReference>
<dbReference type="GO" id="GO:0000287">
    <property type="term" value="F:magnesium ion binding"/>
    <property type="evidence" value="ECO:0007669"/>
    <property type="project" value="UniProtKB-UniRule"/>
</dbReference>
<dbReference type="GO" id="GO:0006083">
    <property type="term" value="P:acetate metabolic process"/>
    <property type="evidence" value="ECO:0007669"/>
    <property type="project" value="TreeGrafter"/>
</dbReference>
<dbReference type="GO" id="GO:0006085">
    <property type="term" value="P:acetyl-CoA biosynthetic process"/>
    <property type="evidence" value="ECO:0007669"/>
    <property type="project" value="UniProtKB-UniRule"/>
</dbReference>
<dbReference type="CDD" id="cd24010">
    <property type="entry name" value="ASKHA_NBD_AcK_PK"/>
    <property type="match status" value="1"/>
</dbReference>
<dbReference type="Gene3D" id="3.30.420.40">
    <property type="match status" value="2"/>
</dbReference>
<dbReference type="HAMAP" id="MF_00020">
    <property type="entry name" value="Acetate_kinase"/>
    <property type="match status" value="1"/>
</dbReference>
<dbReference type="InterPro" id="IPR004372">
    <property type="entry name" value="Ac/propionate_kinase"/>
</dbReference>
<dbReference type="InterPro" id="IPR000890">
    <property type="entry name" value="Aliphatic_acid_kin_short-chain"/>
</dbReference>
<dbReference type="InterPro" id="IPR023865">
    <property type="entry name" value="Aliphatic_acid_kinase_CS"/>
</dbReference>
<dbReference type="InterPro" id="IPR043129">
    <property type="entry name" value="ATPase_NBD"/>
</dbReference>
<dbReference type="NCBIfam" id="TIGR00016">
    <property type="entry name" value="ackA"/>
    <property type="match status" value="1"/>
</dbReference>
<dbReference type="PANTHER" id="PTHR21060">
    <property type="entry name" value="ACETATE KINASE"/>
    <property type="match status" value="1"/>
</dbReference>
<dbReference type="PANTHER" id="PTHR21060:SF21">
    <property type="entry name" value="ACETATE KINASE"/>
    <property type="match status" value="1"/>
</dbReference>
<dbReference type="Pfam" id="PF00871">
    <property type="entry name" value="Acetate_kinase"/>
    <property type="match status" value="1"/>
</dbReference>
<dbReference type="PIRSF" id="PIRSF000722">
    <property type="entry name" value="Acetate_prop_kin"/>
    <property type="match status" value="1"/>
</dbReference>
<dbReference type="PRINTS" id="PR00471">
    <property type="entry name" value="ACETATEKNASE"/>
</dbReference>
<dbReference type="SUPFAM" id="SSF53067">
    <property type="entry name" value="Actin-like ATPase domain"/>
    <property type="match status" value="2"/>
</dbReference>
<dbReference type="PROSITE" id="PS01075">
    <property type="entry name" value="ACETATE_KINASE_1"/>
    <property type="match status" value="1"/>
</dbReference>
<comment type="function">
    <text evidence="1">Catalyzes the formation of acetyl phosphate from acetate and ATP. Can also catalyze the reverse reaction.</text>
</comment>
<comment type="catalytic activity">
    <reaction evidence="1">
        <text>acetate + ATP = acetyl phosphate + ADP</text>
        <dbReference type="Rhea" id="RHEA:11352"/>
        <dbReference type="ChEBI" id="CHEBI:22191"/>
        <dbReference type="ChEBI" id="CHEBI:30089"/>
        <dbReference type="ChEBI" id="CHEBI:30616"/>
        <dbReference type="ChEBI" id="CHEBI:456216"/>
        <dbReference type="EC" id="2.7.2.1"/>
    </reaction>
</comment>
<comment type="cofactor">
    <cofactor evidence="1">
        <name>Mg(2+)</name>
        <dbReference type="ChEBI" id="CHEBI:18420"/>
    </cofactor>
    <cofactor evidence="1">
        <name>Mn(2+)</name>
        <dbReference type="ChEBI" id="CHEBI:29035"/>
    </cofactor>
    <text evidence="1">Mg(2+). Can also accept Mn(2+).</text>
</comment>
<comment type="pathway">
    <text evidence="1">Metabolic intermediate biosynthesis; acetyl-CoA biosynthesis; acetyl-CoA from acetate: step 1/2.</text>
</comment>
<comment type="subunit">
    <text evidence="1">Homodimer.</text>
</comment>
<comment type="subcellular location">
    <subcellularLocation>
        <location evidence="1">Cytoplasm</location>
    </subcellularLocation>
</comment>
<comment type="similarity">
    <text evidence="1">Belongs to the acetokinase family.</text>
</comment>
<proteinExistence type="inferred from homology"/>
<accession>A4XYH6</accession>